<name>S49A3_XENTR</name>
<proteinExistence type="evidence at transcript level"/>
<protein>
    <recommendedName>
        <fullName>Solute carrier family 49 member A3</fullName>
    </recommendedName>
    <alternativeName>
        <fullName>Major facilitator superfamily domain-containing protein 7-a</fullName>
    </alternativeName>
    <alternativeName>
        <fullName>Major facilitator superfamily domain-containing protein 7-b</fullName>
    </alternativeName>
    <alternativeName>
        <fullName>Myosin light polypeptide 5 regulatory protein</fullName>
        <shortName>MYL5</shortName>
    </alternativeName>
</protein>
<organism>
    <name type="scientific">Xenopus tropicalis</name>
    <name type="common">Western clawed frog</name>
    <name type="synonym">Silurana tropicalis</name>
    <dbReference type="NCBI Taxonomy" id="8364"/>
    <lineage>
        <taxon>Eukaryota</taxon>
        <taxon>Metazoa</taxon>
        <taxon>Chordata</taxon>
        <taxon>Craniata</taxon>
        <taxon>Vertebrata</taxon>
        <taxon>Euteleostomi</taxon>
        <taxon>Amphibia</taxon>
        <taxon>Batrachia</taxon>
        <taxon>Anura</taxon>
        <taxon>Pipoidea</taxon>
        <taxon>Pipidae</taxon>
        <taxon>Xenopodinae</taxon>
        <taxon>Xenopus</taxon>
        <taxon>Silurana</taxon>
    </lineage>
</organism>
<accession>Q28FF3</accession>
<accession>F6ZLK2</accession>
<accession>Q6P3R2</accession>
<feature type="chain" id="PRO_0000273411" description="Solute carrier family 49 member A3">
    <location>
        <begin position="1"/>
        <end position="482"/>
    </location>
</feature>
<feature type="transmembrane region" description="Helical" evidence="1">
    <location>
        <begin position="41"/>
        <end position="61"/>
    </location>
</feature>
<feature type="transmembrane region" description="Helical" evidence="1">
    <location>
        <begin position="81"/>
        <end position="101"/>
    </location>
</feature>
<feature type="transmembrane region" description="Helical" evidence="1">
    <location>
        <begin position="109"/>
        <end position="129"/>
    </location>
</feature>
<feature type="transmembrane region" description="Helical" evidence="1">
    <location>
        <begin position="150"/>
        <end position="170"/>
    </location>
</feature>
<feature type="transmembrane region" description="Helical" evidence="1">
    <location>
        <begin position="181"/>
        <end position="201"/>
    </location>
</feature>
<feature type="transmembrane region" description="Helical" evidence="1">
    <location>
        <begin position="206"/>
        <end position="226"/>
    </location>
</feature>
<feature type="transmembrane region" description="Helical" evidence="1">
    <location>
        <begin position="264"/>
        <end position="284"/>
    </location>
</feature>
<feature type="transmembrane region" description="Helical" evidence="1">
    <location>
        <begin position="296"/>
        <end position="316"/>
    </location>
</feature>
<feature type="transmembrane region" description="Helical" evidence="1">
    <location>
        <begin position="330"/>
        <end position="350"/>
    </location>
</feature>
<feature type="transmembrane region" description="Helical" evidence="1">
    <location>
        <begin position="355"/>
        <end position="375"/>
    </location>
</feature>
<feature type="transmembrane region" description="Helical" evidence="1">
    <location>
        <begin position="390"/>
        <end position="410"/>
    </location>
</feature>
<feature type="transmembrane region" description="Helical" evidence="1">
    <location>
        <begin position="437"/>
        <end position="457"/>
    </location>
</feature>
<feature type="splice variant" id="VSP_059311" description="In isoform 2.">
    <location>
        <begin position="400"/>
        <end position="415"/>
    </location>
</feature>
<feature type="sequence conflict" description="In Ref. 1; CAJ83663." evidence="2" ref="1">
    <original>SYTGI</original>
    <variation>TYTGR</variation>
    <location>
        <begin position="137"/>
        <end position="141"/>
    </location>
</feature>
<feature type="sequence conflict" description="In Ref. 1; CAJ83663." ref="1">
    <original>A</original>
    <variation>T</variation>
    <location>
        <position position="227"/>
    </location>
</feature>
<feature type="sequence conflict" description="In Ref. 1; CAJ83663." ref="1">
    <original>H</original>
    <variation>N</variation>
    <location>
        <position position="480"/>
    </location>
</feature>
<sequence>MAEDVSSGEQTEDQAGQPLLNGEIIASNGDKCQFRTYKRRWFVLGVICLLSCTNAMLWISFAPVADVTASFFKCSLDVVNYLSLVYLIIAIPVGFGASWLIDTLGLKYAIVFSSWLNMIGSIIRCGAIVPYLNPSGSYTGIYYLFTGQSLCAIAQPLVLFVPAKLASVWFPEHQRATANMIASMSNPLGVLLANIISPSVVTKEEYIAHMLGIYTVPAIAACILATAGIRAKSPPTPPSASAFNSASEPFIAGIRQLLTNRAYVILMLCFGAGIGIFTAISSFLEQILCFRGYSNLFAGVCGALFIFFGFIGAFVCGLYVDRTKKFKEVVKTCFALTALTSIAFALVINFREQTVLVACVCSLLGLFGFAISPVGMELAVECSYPVGEGSSTGLAFISGQIQGIIYMILFQKLTRPFATSGPSPCGMNQTEIYDWSTSMLVMAALCSFGSCIFIIFFHTKYKRLLAEVNFNGLKEELNTHET</sequence>
<comment type="subcellular location">
    <subcellularLocation>
        <location evidence="2">Membrane</location>
        <topology evidence="2">Multi-pass membrane protein</topology>
    </subcellularLocation>
</comment>
<comment type="alternative products">
    <event type="alternative splicing"/>
    <isoform>
        <id>Q28FF3-1</id>
        <name>1</name>
        <sequence type="displayed"/>
    </isoform>
    <isoform>
        <id>Q28FF3-2</id>
        <name>2</name>
        <sequence type="described" ref="VSP_059311"/>
    </isoform>
</comment>
<comment type="similarity">
    <text evidence="2">Belongs to the major facilitator superfamily.</text>
</comment>
<evidence type="ECO:0000255" key="1"/>
<evidence type="ECO:0000305" key="2"/>
<dbReference type="EMBL" id="CR761997">
    <property type="protein sequence ID" value="CAJ83663.1"/>
    <property type="molecule type" value="mRNA"/>
</dbReference>
<dbReference type="EMBL" id="AAMC01051013">
    <property type="status" value="NOT_ANNOTATED_CDS"/>
    <property type="molecule type" value="Genomic_DNA"/>
</dbReference>
<dbReference type="EMBL" id="AAMC01051014">
    <property type="status" value="NOT_ANNOTATED_CDS"/>
    <property type="molecule type" value="Genomic_DNA"/>
</dbReference>
<dbReference type="EMBL" id="AAMC01051015">
    <property type="status" value="NOT_ANNOTATED_CDS"/>
    <property type="molecule type" value="Genomic_DNA"/>
</dbReference>
<dbReference type="EMBL" id="BC063895">
    <property type="protein sequence ID" value="AAH63895.1"/>
    <property type="molecule type" value="mRNA"/>
</dbReference>
<dbReference type="RefSeq" id="NP_989260.1">
    <molecule id="Q28FF3-2"/>
    <property type="nucleotide sequence ID" value="NM_203929.1"/>
</dbReference>
<dbReference type="RefSeq" id="XP_012813793.1">
    <molecule id="Q28FF3-1"/>
    <property type="nucleotide sequence ID" value="XM_012958339.3"/>
</dbReference>
<dbReference type="SMR" id="Q28FF3"/>
<dbReference type="FunCoup" id="Q28FF3">
    <property type="interactions" value="2"/>
</dbReference>
<dbReference type="STRING" id="8364.ENSXETP00000000428"/>
<dbReference type="PaxDb" id="8364-ENSXETP00000010697"/>
<dbReference type="DNASU" id="394873"/>
<dbReference type="GeneID" id="394873"/>
<dbReference type="KEGG" id="xtr:394873"/>
<dbReference type="AGR" id="Xenbase:XB-GENE-5740366"/>
<dbReference type="CTD" id="84179"/>
<dbReference type="Xenbase" id="XB-GENE-5740366">
    <property type="gene designation" value="slc49a3"/>
</dbReference>
<dbReference type="eggNOG" id="KOG2563">
    <property type="taxonomic scope" value="Eukaryota"/>
</dbReference>
<dbReference type="InParanoid" id="Q28FF3"/>
<dbReference type="OMA" id="STICWTG"/>
<dbReference type="OrthoDB" id="422206at2759"/>
<dbReference type="TreeFam" id="TF314292"/>
<dbReference type="Proteomes" id="UP000008143">
    <property type="component" value="Chromosome 1"/>
</dbReference>
<dbReference type="Bgee" id="ENSXETG00000004914">
    <property type="expression patterns" value="Expressed in testis and 12 other cell types or tissues"/>
</dbReference>
<dbReference type="ExpressionAtlas" id="Q28FF3">
    <property type="expression patterns" value="baseline"/>
</dbReference>
<dbReference type="GO" id="GO:0016020">
    <property type="term" value="C:membrane"/>
    <property type="evidence" value="ECO:0007669"/>
    <property type="project" value="UniProtKB-SubCell"/>
</dbReference>
<dbReference type="GO" id="GO:0022857">
    <property type="term" value="F:transmembrane transporter activity"/>
    <property type="evidence" value="ECO:0007669"/>
    <property type="project" value="InterPro"/>
</dbReference>
<dbReference type="CDD" id="cd17399">
    <property type="entry name" value="MFS_MFSD7"/>
    <property type="match status" value="1"/>
</dbReference>
<dbReference type="Gene3D" id="1.20.1250.20">
    <property type="entry name" value="MFS general substrate transporter like domains"/>
    <property type="match status" value="2"/>
</dbReference>
<dbReference type="InterPro" id="IPR049680">
    <property type="entry name" value="FLVCR1-2_SLC49-like"/>
</dbReference>
<dbReference type="InterPro" id="IPR011701">
    <property type="entry name" value="MFS"/>
</dbReference>
<dbReference type="InterPro" id="IPR020846">
    <property type="entry name" value="MFS_dom"/>
</dbReference>
<dbReference type="InterPro" id="IPR036259">
    <property type="entry name" value="MFS_trans_sf"/>
</dbReference>
<dbReference type="PANTHER" id="PTHR10924">
    <property type="entry name" value="MAJOR FACILITATOR SUPERFAMILY PROTEIN-RELATED"/>
    <property type="match status" value="1"/>
</dbReference>
<dbReference type="PANTHER" id="PTHR10924:SF6">
    <property type="entry name" value="SOLUTE CARRIER FAMILY 49 MEMBER A3"/>
    <property type="match status" value="1"/>
</dbReference>
<dbReference type="Pfam" id="PF07690">
    <property type="entry name" value="MFS_1"/>
    <property type="match status" value="1"/>
</dbReference>
<dbReference type="SUPFAM" id="SSF103473">
    <property type="entry name" value="MFS general substrate transporter"/>
    <property type="match status" value="1"/>
</dbReference>
<dbReference type="PROSITE" id="PS50850">
    <property type="entry name" value="MFS"/>
    <property type="match status" value="1"/>
</dbReference>
<keyword id="KW-0025">Alternative splicing</keyword>
<keyword id="KW-0472">Membrane</keyword>
<keyword id="KW-1185">Reference proteome</keyword>
<keyword id="KW-0812">Transmembrane</keyword>
<keyword id="KW-1133">Transmembrane helix</keyword>
<keyword id="KW-0813">Transport</keyword>
<gene>
    <name type="primary">slc49a3</name>
    <name type="synonym">mfsd7-A</name>
    <name type="synonym">mfsd7-B</name>
    <name type="ORF">TEgg026p17.1</name>
</gene>
<reference key="1">
    <citation type="submission" date="2006-10" db="EMBL/GenBank/DDBJ databases">
        <authorList>
            <consortium name="Sanger Xenopus tropicalis EST/cDNA project"/>
        </authorList>
    </citation>
    <scope>NUCLEOTIDE SEQUENCE [LARGE SCALE MRNA] (ISOFORM 1)</scope>
    <source>
        <tissue>Egg</tissue>
    </source>
</reference>
<reference key="2">
    <citation type="journal article" date="2010" name="Science">
        <title>The genome of the Western clawed frog Xenopus tropicalis.</title>
        <authorList>
            <person name="Hellsten U."/>
            <person name="Harland R.M."/>
            <person name="Gilchrist M.J."/>
            <person name="Hendrix D."/>
            <person name="Jurka J."/>
            <person name="Kapitonov V."/>
            <person name="Ovcharenko I."/>
            <person name="Putnam N.H."/>
            <person name="Shu S."/>
            <person name="Taher L."/>
            <person name="Blitz I.L."/>
            <person name="Blumberg B."/>
            <person name="Dichmann D.S."/>
            <person name="Dubchak I."/>
            <person name="Amaya E."/>
            <person name="Detter J.C."/>
            <person name="Fletcher R."/>
            <person name="Gerhard D.S."/>
            <person name="Goodstein D."/>
            <person name="Graves T."/>
            <person name="Grigoriev I.V."/>
            <person name="Grimwood J."/>
            <person name="Kawashima T."/>
            <person name="Lindquist E."/>
            <person name="Lucas S.M."/>
            <person name="Mead P.E."/>
            <person name="Mitros T."/>
            <person name="Ogino H."/>
            <person name="Ohta Y."/>
            <person name="Poliakov A.V."/>
            <person name="Pollet N."/>
            <person name="Robert J."/>
            <person name="Salamov A."/>
            <person name="Sater A.K."/>
            <person name="Schmutz J."/>
            <person name="Terry A."/>
            <person name="Vize P.D."/>
            <person name="Warren W.C."/>
            <person name="Wells D."/>
            <person name="Wills A."/>
            <person name="Wilson R.K."/>
            <person name="Zimmerman L.B."/>
            <person name="Zorn A.M."/>
            <person name="Grainger R."/>
            <person name="Grammer T."/>
            <person name="Khokha M.K."/>
            <person name="Richardson P.M."/>
            <person name="Rokhsar D.S."/>
        </authorList>
    </citation>
    <scope>NUCLEOTIDE SEQUENCE [LARGE SCALE GENOMIC DNA]</scope>
</reference>
<reference key="3">
    <citation type="submission" date="2003-12" db="EMBL/GenBank/DDBJ databases">
        <authorList>
            <consortium name="NIH - Xenopus Gene Collection (XGC) project"/>
        </authorList>
    </citation>
    <scope>NUCLEOTIDE SEQUENCE [LARGE SCALE MRNA] (ISOFORM 2)</scope>
    <source>
        <tissue>Embryo</tissue>
    </source>
</reference>